<comment type="function">
    <text evidence="1">Acts as an alpha-ketoglutarate-dependent dioxygenase catalyzing hydroxylation of glutarate (GA) to L-2-hydroxyglutarate (L2HG). Functions in a L-lysine degradation pathway that proceeds via cadaverine, glutarate and L-2-hydroxyglutarate.</text>
</comment>
<comment type="catalytic activity">
    <reaction evidence="1">
        <text>glutarate + 2-oxoglutarate + O2 = (S)-2-hydroxyglutarate + succinate + CO2</text>
        <dbReference type="Rhea" id="RHEA:13821"/>
        <dbReference type="ChEBI" id="CHEBI:15379"/>
        <dbReference type="ChEBI" id="CHEBI:16526"/>
        <dbReference type="ChEBI" id="CHEBI:16782"/>
        <dbReference type="ChEBI" id="CHEBI:16810"/>
        <dbReference type="ChEBI" id="CHEBI:30031"/>
        <dbReference type="ChEBI" id="CHEBI:30921"/>
        <dbReference type="EC" id="1.14.11.64"/>
    </reaction>
    <physiologicalReaction direction="left-to-right" evidence="1">
        <dbReference type="Rhea" id="RHEA:13822"/>
    </physiologicalReaction>
</comment>
<comment type="cofactor">
    <cofactor evidence="1">
        <name>Fe(2+)</name>
        <dbReference type="ChEBI" id="CHEBI:29033"/>
    </cofactor>
    <text evidence="1">Binds 1 Fe(2+) ion per subunit.</text>
</comment>
<comment type="pathway">
    <text evidence="1">Amino-acid degradation.</text>
</comment>
<comment type="subunit">
    <text evidence="1">Homotetramer.</text>
</comment>
<comment type="similarity">
    <text evidence="1">Belongs to the glutarate hydroxylase family.</text>
</comment>
<protein>
    <recommendedName>
        <fullName evidence="1">Glutarate 2-hydroxylase</fullName>
        <shortName evidence="1">G-2-H</shortName>
        <ecNumber evidence="1">1.14.11.64</ecNumber>
    </recommendedName>
</protein>
<sequence length="325" mass="37269">MNAFTQIDELVMPLPLEPQGYTIAPSKQSPRLLELTFARETVEAFVQAVAQWPVQALEYKSFLRFRIGEILDELCQGTLRPVLLNTILDRATGGMLITPIGLDDVSQAEDMVKFTTACAHLIGRSNYDAMSGQFYARFVVVNSDNSDSYLRQPHRVMELHNDGTFVNQITDYVLMLKIDEKNMEGGNSLLLHLDDWEQCEAFFRHPMARREMRWTAPPSKKVAEDVFHSVFDTDTEGRPTMRYIDQFVQPENYEEGIWLNALSESLEGSSKKVSVPVGVGSFLLINNLFWLHGRDRFTPHEGLRRELMRQRGYVAFPKPLYQRGQ</sequence>
<evidence type="ECO:0000255" key="1">
    <source>
        <dbReference type="HAMAP-Rule" id="MF_01083"/>
    </source>
</evidence>
<dbReference type="EC" id="1.14.11.64" evidence="1"/>
<dbReference type="EMBL" id="CP000712">
    <property type="protein sequence ID" value="ABQ78914.1"/>
    <property type="molecule type" value="Genomic_DNA"/>
</dbReference>
<dbReference type="SMR" id="A5W454"/>
<dbReference type="KEGG" id="ppf:Pput_2782"/>
<dbReference type="eggNOG" id="ENOG502Z8GB">
    <property type="taxonomic scope" value="Bacteria"/>
</dbReference>
<dbReference type="HOGENOM" id="CLU_075277_0_0_6"/>
<dbReference type="GO" id="GO:0008198">
    <property type="term" value="F:ferrous iron binding"/>
    <property type="evidence" value="ECO:0007669"/>
    <property type="project" value="UniProtKB-UniRule"/>
</dbReference>
<dbReference type="GO" id="GO:0106343">
    <property type="term" value="F:glutarate dioxygenase activity"/>
    <property type="evidence" value="ECO:0007669"/>
    <property type="project" value="UniProtKB-EC"/>
</dbReference>
<dbReference type="GO" id="GO:0050498">
    <property type="term" value="F:oxidoreductase activity, acting on paired donors, with incorporation or reduction of molecular oxygen, with 2-oxoglutarate as one donor, and the other dehydrogenated"/>
    <property type="evidence" value="ECO:0007669"/>
    <property type="project" value="UniProtKB-UniRule"/>
</dbReference>
<dbReference type="GO" id="GO:0019477">
    <property type="term" value="P:L-lysine catabolic process"/>
    <property type="evidence" value="ECO:0007669"/>
    <property type="project" value="UniProtKB-UniRule"/>
</dbReference>
<dbReference type="Gene3D" id="3.60.130.10">
    <property type="entry name" value="Clavaminate synthase-like"/>
    <property type="match status" value="1"/>
</dbReference>
<dbReference type="HAMAP" id="MF_01083">
    <property type="entry name" value="glutarate_hydroxylase"/>
    <property type="match status" value="1"/>
</dbReference>
<dbReference type="InterPro" id="IPR015038">
    <property type="entry name" value="GlaH"/>
</dbReference>
<dbReference type="InterPro" id="IPR042098">
    <property type="entry name" value="TauD-like_sf"/>
</dbReference>
<dbReference type="NCBIfam" id="NF002814">
    <property type="entry name" value="PRK02963.1"/>
    <property type="match status" value="1"/>
</dbReference>
<dbReference type="Pfam" id="PF08943">
    <property type="entry name" value="CsiD"/>
    <property type="match status" value="1"/>
</dbReference>
<dbReference type="SUPFAM" id="SSF51197">
    <property type="entry name" value="Clavaminate synthase-like"/>
    <property type="match status" value="1"/>
</dbReference>
<gene>
    <name evidence="1" type="primary">glaH</name>
    <name type="ordered locus">Pput_2782</name>
</gene>
<proteinExistence type="inferred from homology"/>
<keyword id="KW-0223">Dioxygenase</keyword>
<keyword id="KW-0408">Iron</keyword>
<keyword id="KW-0479">Metal-binding</keyword>
<keyword id="KW-0560">Oxidoreductase</keyword>
<feature type="chain" id="PRO_1000064811" description="Glutarate 2-hydroxylase">
    <location>
        <begin position="1"/>
        <end position="325"/>
    </location>
</feature>
<feature type="binding site" evidence="1">
    <location>
        <position position="160"/>
    </location>
    <ligand>
        <name>Fe cation</name>
        <dbReference type="ChEBI" id="CHEBI:24875"/>
    </ligand>
</feature>
<feature type="binding site" evidence="1">
    <location>
        <position position="162"/>
    </location>
    <ligand>
        <name>Fe cation</name>
        <dbReference type="ChEBI" id="CHEBI:24875"/>
    </ligand>
</feature>
<feature type="binding site" evidence="1">
    <location>
        <position position="292"/>
    </location>
    <ligand>
        <name>Fe cation</name>
        <dbReference type="ChEBI" id="CHEBI:24875"/>
    </ligand>
</feature>
<accession>A5W454</accession>
<reference key="1">
    <citation type="submission" date="2007-05" db="EMBL/GenBank/DDBJ databases">
        <title>Complete sequence of Pseudomonas putida F1.</title>
        <authorList>
            <consortium name="US DOE Joint Genome Institute"/>
            <person name="Copeland A."/>
            <person name="Lucas S."/>
            <person name="Lapidus A."/>
            <person name="Barry K."/>
            <person name="Detter J.C."/>
            <person name="Glavina del Rio T."/>
            <person name="Hammon N."/>
            <person name="Israni S."/>
            <person name="Dalin E."/>
            <person name="Tice H."/>
            <person name="Pitluck S."/>
            <person name="Chain P."/>
            <person name="Malfatti S."/>
            <person name="Shin M."/>
            <person name="Vergez L."/>
            <person name="Schmutz J."/>
            <person name="Larimer F."/>
            <person name="Land M."/>
            <person name="Hauser L."/>
            <person name="Kyrpides N."/>
            <person name="Lykidis A."/>
            <person name="Parales R."/>
            <person name="Richardson P."/>
        </authorList>
    </citation>
    <scope>NUCLEOTIDE SEQUENCE [LARGE SCALE GENOMIC DNA]</scope>
    <source>
        <strain>ATCC 700007 / DSM 6899 / JCM 31910 / BCRC 17059 / LMG 24140 / F1</strain>
    </source>
</reference>
<organism>
    <name type="scientific">Pseudomonas putida (strain ATCC 700007 / DSM 6899 / JCM 31910 / BCRC 17059 / LMG 24140 / F1)</name>
    <dbReference type="NCBI Taxonomy" id="351746"/>
    <lineage>
        <taxon>Bacteria</taxon>
        <taxon>Pseudomonadati</taxon>
        <taxon>Pseudomonadota</taxon>
        <taxon>Gammaproteobacteria</taxon>
        <taxon>Pseudomonadales</taxon>
        <taxon>Pseudomonadaceae</taxon>
        <taxon>Pseudomonas</taxon>
    </lineage>
</organism>
<name>GLAH_PSEP1</name>